<keyword id="KW-0067">ATP-binding</keyword>
<keyword id="KW-0460">Magnesium</keyword>
<keyword id="KW-0479">Metal-binding</keyword>
<keyword id="KW-0547">Nucleotide-binding</keyword>
<keyword id="KW-0548">Nucleotidyltransferase</keyword>
<keyword id="KW-1185">Reference proteome</keyword>
<keyword id="KW-0692">RNA repair</keyword>
<keyword id="KW-0694">RNA-binding</keyword>
<keyword id="KW-0808">Transferase</keyword>
<keyword id="KW-0819">tRNA processing</keyword>
<accession>Q5V030</accession>
<reference key="1">
    <citation type="journal article" date="2004" name="Genome Res.">
        <title>Genome sequence of Haloarcula marismortui: a halophilic archaeon from the Dead Sea.</title>
        <authorList>
            <person name="Baliga N.S."/>
            <person name="Bonneau R."/>
            <person name="Facciotti M.T."/>
            <person name="Pan M."/>
            <person name="Glusman G."/>
            <person name="Deutsch E.W."/>
            <person name="Shannon P."/>
            <person name="Chiu Y."/>
            <person name="Weng R.S."/>
            <person name="Gan R.R."/>
            <person name="Hung P."/>
            <person name="Date S.V."/>
            <person name="Marcotte E."/>
            <person name="Hood L."/>
            <person name="Ng W.V."/>
        </authorList>
    </citation>
    <scope>NUCLEOTIDE SEQUENCE [LARGE SCALE GENOMIC DNA]</scope>
    <source>
        <strain>ATCC 43049 / DSM 3752 / JCM 8966 / VKM B-1809</strain>
    </source>
</reference>
<dbReference type="EC" id="2.7.7.72" evidence="1"/>
<dbReference type="EMBL" id="AY596297">
    <property type="protein sequence ID" value="AAV47123.1"/>
    <property type="molecule type" value="Genomic_DNA"/>
</dbReference>
<dbReference type="RefSeq" id="WP_011224137.1">
    <property type="nucleotide sequence ID" value="NC_006396.1"/>
</dbReference>
<dbReference type="SMR" id="Q5V030"/>
<dbReference type="STRING" id="272569.rrnAC2298"/>
<dbReference type="PaxDb" id="272569-rrnAC2298"/>
<dbReference type="EnsemblBacteria" id="AAV47123">
    <property type="protein sequence ID" value="AAV47123"/>
    <property type="gene ID" value="rrnAC2298"/>
</dbReference>
<dbReference type="GeneID" id="40153198"/>
<dbReference type="KEGG" id="hma:rrnAC2298"/>
<dbReference type="PATRIC" id="fig|272569.17.peg.2924"/>
<dbReference type="eggNOG" id="arCOG04249">
    <property type="taxonomic scope" value="Archaea"/>
</dbReference>
<dbReference type="HOGENOM" id="CLU_044679_0_0_2"/>
<dbReference type="Proteomes" id="UP000001169">
    <property type="component" value="Chromosome I"/>
</dbReference>
<dbReference type="GO" id="GO:0005524">
    <property type="term" value="F:ATP binding"/>
    <property type="evidence" value="ECO:0007669"/>
    <property type="project" value="UniProtKB-UniRule"/>
</dbReference>
<dbReference type="GO" id="GO:0004810">
    <property type="term" value="F:CCA tRNA nucleotidyltransferase activity"/>
    <property type="evidence" value="ECO:0007669"/>
    <property type="project" value="UniProtKB-UniRule"/>
</dbReference>
<dbReference type="GO" id="GO:0000287">
    <property type="term" value="F:magnesium ion binding"/>
    <property type="evidence" value="ECO:0007669"/>
    <property type="project" value="UniProtKB-UniRule"/>
</dbReference>
<dbReference type="GO" id="GO:0000049">
    <property type="term" value="F:tRNA binding"/>
    <property type="evidence" value="ECO:0007669"/>
    <property type="project" value="UniProtKB-UniRule"/>
</dbReference>
<dbReference type="GO" id="GO:0042245">
    <property type="term" value="P:RNA repair"/>
    <property type="evidence" value="ECO:0007669"/>
    <property type="project" value="UniProtKB-KW"/>
</dbReference>
<dbReference type="GO" id="GO:0001680">
    <property type="term" value="P:tRNA 3'-terminal CCA addition"/>
    <property type="evidence" value="ECO:0007669"/>
    <property type="project" value="UniProtKB-UniRule"/>
</dbReference>
<dbReference type="CDD" id="cd05400">
    <property type="entry name" value="NT_2-5OAS_ClassI-CCAase"/>
    <property type="match status" value="1"/>
</dbReference>
<dbReference type="Gene3D" id="3.30.70.1550">
    <property type="entry name" value="Archaeal tRNA CCA-adding enzyme catalytic domain"/>
    <property type="match status" value="1"/>
</dbReference>
<dbReference type="Gene3D" id="3.30.460.10">
    <property type="entry name" value="Beta Polymerase, domain 2"/>
    <property type="match status" value="1"/>
</dbReference>
<dbReference type="Gene3D" id="1.10.1410.30">
    <property type="entry name" value="CCA tRNA nucleotidyltransferase, domain 2"/>
    <property type="match status" value="1"/>
</dbReference>
<dbReference type="Gene3D" id="3.30.70.590">
    <property type="entry name" value="Poly(A) polymerase predicted RNA binding domain"/>
    <property type="match status" value="1"/>
</dbReference>
<dbReference type="HAMAP" id="MF_01264">
    <property type="entry name" value="CCA_arch"/>
    <property type="match status" value="1"/>
</dbReference>
<dbReference type="InterPro" id="IPR048833">
    <property type="entry name" value="CAA_C"/>
</dbReference>
<dbReference type="InterPro" id="IPR008229">
    <property type="entry name" value="CCA-adding_arc"/>
</dbReference>
<dbReference type="InterPro" id="IPR042090">
    <property type="entry name" value="CCA_tRNA_nucleotrans_2"/>
</dbReference>
<dbReference type="InterPro" id="IPR006116">
    <property type="entry name" value="NT_2-5OAS_ClassI-CCAase"/>
</dbReference>
<dbReference type="InterPro" id="IPR043519">
    <property type="entry name" value="NT_sf"/>
</dbReference>
<dbReference type="InterPro" id="IPR011068">
    <property type="entry name" value="NuclTrfase_I-like_C"/>
</dbReference>
<dbReference type="InterPro" id="IPR002934">
    <property type="entry name" value="Polymerase_NTP_transf_dom"/>
</dbReference>
<dbReference type="InterPro" id="IPR015329">
    <property type="entry name" value="tRNA_NucTransf2"/>
</dbReference>
<dbReference type="NCBIfam" id="TIGR03671">
    <property type="entry name" value="cca_archaeal"/>
    <property type="match status" value="1"/>
</dbReference>
<dbReference type="PANTHER" id="PTHR39643">
    <property type="entry name" value="CCA-ADDING ENZYME"/>
    <property type="match status" value="1"/>
</dbReference>
<dbReference type="PANTHER" id="PTHR39643:SF1">
    <property type="entry name" value="CCA-ADDING ENZYME"/>
    <property type="match status" value="1"/>
</dbReference>
<dbReference type="Pfam" id="PF21133">
    <property type="entry name" value="CAA_C"/>
    <property type="match status" value="1"/>
</dbReference>
<dbReference type="Pfam" id="PF01909">
    <property type="entry name" value="NTP_transf_2"/>
    <property type="match status" value="1"/>
</dbReference>
<dbReference type="Pfam" id="PF09249">
    <property type="entry name" value="tRNA_NucTransf2"/>
    <property type="match status" value="1"/>
</dbReference>
<dbReference type="PIRSF" id="PIRSF005335">
    <property type="entry name" value="CCA_arch"/>
    <property type="match status" value="1"/>
</dbReference>
<dbReference type="SUPFAM" id="SSF81301">
    <property type="entry name" value="Nucleotidyltransferase"/>
    <property type="match status" value="1"/>
</dbReference>
<dbReference type="SUPFAM" id="SSF55003">
    <property type="entry name" value="PAP/Archaeal CCA-adding enzyme, C-terminal domain"/>
    <property type="match status" value="1"/>
</dbReference>
<dbReference type="SUPFAM" id="SSF81631">
    <property type="entry name" value="PAP/OAS1 substrate-binding domain"/>
    <property type="match status" value="1"/>
</dbReference>
<proteinExistence type="inferred from homology"/>
<feature type="chain" id="PRO_0000139066" description="CCA-adding enzyme">
    <location>
        <begin position="1"/>
        <end position="466"/>
    </location>
</feature>
<feature type="binding site" evidence="1">
    <location>
        <position position="55"/>
    </location>
    <ligand>
        <name>ATP</name>
        <dbReference type="ChEBI" id="CHEBI:30616"/>
    </ligand>
</feature>
<feature type="binding site" evidence="1">
    <location>
        <position position="55"/>
    </location>
    <ligand>
        <name>CTP</name>
        <dbReference type="ChEBI" id="CHEBI:37563"/>
    </ligand>
</feature>
<feature type="binding site" evidence="1">
    <location>
        <position position="58"/>
    </location>
    <ligand>
        <name>ATP</name>
        <dbReference type="ChEBI" id="CHEBI:30616"/>
    </ligand>
</feature>
<feature type="binding site" evidence="1">
    <location>
        <position position="58"/>
    </location>
    <ligand>
        <name>CTP</name>
        <dbReference type="ChEBI" id="CHEBI:37563"/>
    </ligand>
</feature>
<feature type="binding site" evidence="1">
    <location>
        <position position="67"/>
    </location>
    <ligand>
        <name>Mg(2+)</name>
        <dbReference type="ChEBI" id="CHEBI:18420"/>
    </ligand>
</feature>
<feature type="binding site" evidence="1">
    <location>
        <position position="69"/>
    </location>
    <ligand>
        <name>Mg(2+)</name>
        <dbReference type="ChEBI" id="CHEBI:18420"/>
    </ligand>
</feature>
<feature type="binding site" evidence="1">
    <location>
        <position position="118"/>
    </location>
    <ligand>
        <name>Mg(2+)</name>
        <dbReference type="ChEBI" id="CHEBI:18420"/>
    </ligand>
</feature>
<feature type="binding site" evidence="1">
    <location>
        <position position="141"/>
    </location>
    <ligand>
        <name>ATP</name>
        <dbReference type="ChEBI" id="CHEBI:30616"/>
    </ligand>
</feature>
<feature type="binding site" evidence="1">
    <location>
        <position position="141"/>
    </location>
    <ligand>
        <name>CTP</name>
        <dbReference type="ChEBI" id="CHEBI:37563"/>
    </ligand>
</feature>
<feature type="binding site" evidence="1">
    <location>
        <position position="161"/>
    </location>
    <ligand>
        <name>ATP</name>
        <dbReference type="ChEBI" id="CHEBI:30616"/>
    </ligand>
</feature>
<feature type="binding site" evidence="1">
    <location>
        <position position="161"/>
    </location>
    <ligand>
        <name>CTP</name>
        <dbReference type="ChEBI" id="CHEBI:37563"/>
    </ligand>
</feature>
<feature type="binding site" evidence="1">
    <location>
        <position position="170"/>
    </location>
    <ligand>
        <name>ATP</name>
        <dbReference type="ChEBI" id="CHEBI:30616"/>
    </ligand>
</feature>
<feature type="binding site" evidence="1">
    <location>
        <position position="170"/>
    </location>
    <ligand>
        <name>CTP</name>
        <dbReference type="ChEBI" id="CHEBI:37563"/>
    </ligand>
</feature>
<evidence type="ECO:0000255" key="1">
    <source>
        <dbReference type="HAMAP-Rule" id="MF_01264"/>
    </source>
</evidence>
<organism>
    <name type="scientific">Haloarcula marismortui (strain ATCC 43049 / DSM 3752 / JCM 8966 / VKM B-1809)</name>
    <name type="common">Halobacterium marismortui</name>
    <dbReference type="NCBI Taxonomy" id="272569"/>
    <lineage>
        <taxon>Archaea</taxon>
        <taxon>Methanobacteriati</taxon>
        <taxon>Methanobacteriota</taxon>
        <taxon>Stenosarchaea group</taxon>
        <taxon>Halobacteria</taxon>
        <taxon>Halobacteriales</taxon>
        <taxon>Haloarculaceae</taxon>
        <taxon>Haloarcula</taxon>
    </lineage>
</organism>
<protein>
    <recommendedName>
        <fullName evidence="1">CCA-adding enzyme</fullName>
        <ecNumber evidence="1">2.7.7.72</ecNumber>
    </recommendedName>
    <alternativeName>
        <fullName evidence="1">CCA tRNA nucleotidyltransferase</fullName>
    </alternativeName>
    <alternativeName>
        <fullName evidence="1">tRNA CCA-pyrophosphorylase</fullName>
    </alternativeName>
    <alternativeName>
        <fullName evidence="1">tRNA adenylyl-/cytidylyl- transferase</fullName>
    </alternativeName>
    <alternativeName>
        <fullName evidence="1">tRNA nucleotidyltransferase</fullName>
    </alternativeName>
    <alternativeName>
        <fullName evidence="1">tRNA-NT</fullName>
    </alternativeName>
</protein>
<gene>
    <name evidence="1" type="primary">cca</name>
    <name type="ordered locus">rrnAC2298</name>
</gene>
<name>CCA_HALMA</name>
<comment type="function">
    <text evidence="1">Catalyzes the addition and repair of the essential 3'-terminal CCA sequence in tRNAs without using a nucleic acid template. Adds these three nucleotides in the order of C, C, and A to the tRNA nucleotide-73, using CTP and ATP as substrates and producing inorganic pyrophosphate. tRNA 3'-terminal CCA addition is required both for tRNA processing and repair. Also involved in tRNA surveillance by mediating tandem CCA addition to generate a CCACCA at the 3' terminus of unstable tRNAs. While stable tRNAs receive only 3'-terminal CCA, unstable tRNAs are marked with CCACCA and rapidly degraded.</text>
</comment>
<comment type="catalytic activity">
    <reaction evidence="1">
        <text>a tRNA precursor + 2 CTP + ATP = a tRNA with a 3' CCA end + 3 diphosphate</text>
        <dbReference type="Rhea" id="RHEA:14433"/>
        <dbReference type="Rhea" id="RHEA-COMP:10465"/>
        <dbReference type="Rhea" id="RHEA-COMP:10468"/>
        <dbReference type="ChEBI" id="CHEBI:30616"/>
        <dbReference type="ChEBI" id="CHEBI:33019"/>
        <dbReference type="ChEBI" id="CHEBI:37563"/>
        <dbReference type="ChEBI" id="CHEBI:74896"/>
        <dbReference type="ChEBI" id="CHEBI:83071"/>
        <dbReference type="EC" id="2.7.7.72"/>
    </reaction>
</comment>
<comment type="catalytic activity">
    <reaction evidence="1">
        <text>a tRNA with a 3' CCA end + 2 CTP + ATP = a tRNA with a 3' CCACCA end + 3 diphosphate</text>
        <dbReference type="Rhea" id="RHEA:76235"/>
        <dbReference type="Rhea" id="RHEA-COMP:10468"/>
        <dbReference type="Rhea" id="RHEA-COMP:18655"/>
        <dbReference type="ChEBI" id="CHEBI:30616"/>
        <dbReference type="ChEBI" id="CHEBI:33019"/>
        <dbReference type="ChEBI" id="CHEBI:37563"/>
        <dbReference type="ChEBI" id="CHEBI:83071"/>
        <dbReference type="ChEBI" id="CHEBI:195187"/>
    </reaction>
    <physiologicalReaction direction="left-to-right" evidence="1">
        <dbReference type="Rhea" id="RHEA:76236"/>
    </physiologicalReaction>
</comment>
<comment type="cofactor">
    <cofactor evidence="1">
        <name>Mg(2+)</name>
        <dbReference type="ChEBI" id="CHEBI:18420"/>
    </cofactor>
</comment>
<comment type="subunit">
    <text evidence="1">Homodimer.</text>
</comment>
<comment type="miscellaneous">
    <text evidence="1">A single active site specifically recognizes both ATP and CTP and is responsible for their addition.</text>
</comment>
<comment type="similarity">
    <text evidence="1">Belongs to the tRNA nucleotidyltransferase/poly(A) polymerase family. Archaeal CCA-adding enzyme subfamily.</text>
</comment>
<sequence>MSDEFDAVVGKVRARASPTDDERAQLQRVADAVMADAEAAIADLPVEAEVVQVGSTARGTWTAGDRDVDVFVCFPPSIDREALEEYGLAVGHDVLPDGREEYAEHPYVVGEREGYAVDLVPCYAVENATEIQSAVDRTPFHTRYLQERLDDNSAAEVRVAKQFLKGIGVYGSDLRTRGFSGYLTELLVLEFGGFRAFLEAVADWHPPVRLDPDDHGSETFDDPLVVIDPTDPERNVAAVLSETNVATLQHYARDLLAEPRVSLFTEDDPCPFEAADVEAAVSQRGTTPVALRFAAPDVVDDQLWPQLRKSLDGLCSELDRRGFEVLRSAAFVEDDSGKPETLDTESRGRDVVLLLEFAVAEQPAVERHEGPPVHVREHASGFFQKYDDNSEVAGPFIDGDRYVVERQRAFTTATGFLSSAAVYDVGLGQRIESALENGYEVLVGTDIAALADGFGVDLASYFDPKP</sequence>